<dbReference type="EMBL" id="M77845">
    <property type="protein sequence ID" value="AAA34883.1"/>
    <property type="molecule type" value="Genomic_DNA"/>
</dbReference>
<dbReference type="EMBL" id="X59720">
    <property type="protein sequence ID" value="CAC42976.1"/>
    <property type="molecule type" value="Genomic_DNA"/>
</dbReference>
<dbReference type="EMBL" id="BK006937">
    <property type="protein sequence ID" value="DAA07504.1"/>
    <property type="molecule type" value="Genomic_DNA"/>
</dbReference>
<dbReference type="PIR" id="S31269">
    <property type="entry name" value="S31269"/>
</dbReference>
<dbReference type="RefSeq" id="NP_058137.1">
    <property type="nucleotide sequence ID" value="NM_001178739.1"/>
</dbReference>
<dbReference type="BioGRID" id="31007">
    <property type="interactions" value="209"/>
</dbReference>
<dbReference type="DIP" id="DIP-2538N"/>
<dbReference type="FunCoup" id="P32903">
    <property type="interactions" value="101"/>
</dbReference>
<dbReference type="IntAct" id="P32903">
    <property type="interactions" value="31"/>
</dbReference>
<dbReference type="MINT" id="P32903"/>
<dbReference type="STRING" id="4932.YCR024C-A"/>
<dbReference type="PaxDb" id="4932-YCR024C-A"/>
<dbReference type="TopDownProteomics" id="P32903"/>
<dbReference type="EnsemblFungi" id="YCR024C-A_mRNA">
    <property type="protein sequence ID" value="YCR024C-A"/>
    <property type="gene ID" value="YCR024C-A"/>
</dbReference>
<dbReference type="GeneID" id="850389"/>
<dbReference type="KEGG" id="sce:YCR024C-A"/>
<dbReference type="AGR" id="SGD:S000000619"/>
<dbReference type="SGD" id="S000000619">
    <property type="gene designation" value="PMP1"/>
</dbReference>
<dbReference type="VEuPathDB" id="FungiDB:YCR024C-A"/>
<dbReference type="eggNOG" id="ENOG502SFZ7">
    <property type="taxonomic scope" value="Eukaryota"/>
</dbReference>
<dbReference type="GeneTree" id="ENSGT00940000176551"/>
<dbReference type="HOGENOM" id="CLU_219858_0_0_1"/>
<dbReference type="InParanoid" id="P32903"/>
<dbReference type="OrthoDB" id="4065235at2759"/>
<dbReference type="BioCyc" id="YEAST:G3O-29340-MONOMER"/>
<dbReference type="BioGRID-ORCS" id="850389">
    <property type="hits" value="0 hits in 10 CRISPR screens"/>
</dbReference>
<dbReference type="ChiTaRS" id="PMP1">
    <property type="organism name" value="yeast"/>
</dbReference>
<dbReference type="PRO" id="PR:P32903"/>
<dbReference type="Proteomes" id="UP000002311">
    <property type="component" value="Chromosome III"/>
</dbReference>
<dbReference type="GO" id="GO:0016020">
    <property type="term" value="C:membrane"/>
    <property type="evidence" value="ECO:0000314"/>
    <property type="project" value="SGD"/>
</dbReference>
<dbReference type="GO" id="GO:0005886">
    <property type="term" value="C:plasma membrane"/>
    <property type="evidence" value="ECO:0000314"/>
    <property type="project" value="SGD"/>
</dbReference>
<dbReference type="GO" id="GO:0030234">
    <property type="term" value="F:enzyme regulator activity"/>
    <property type="evidence" value="ECO:0000316"/>
    <property type="project" value="SGD"/>
</dbReference>
<dbReference type="InterPro" id="IPR012589">
    <property type="entry name" value="Pmp1/Pmp2"/>
</dbReference>
<dbReference type="Pfam" id="PF08114">
    <property type="entry name" value="PMP1_2"/>
    <property type="match status" value="1"/>
</dbReference>
<proteinExistence type="evidence at protein level"/>
<accession>P32903</accession>
<accession>D6VR35</accession>
<accession>Q76PA9</accession>
<comment type="subunit">
    <text>Monomer and homodimer. Associated with the 100 kDa subunit of the plasma membrane H(+)-ATPase.</text>
</comment>
<comment type="subcellular location">
    <subcellularLocation>
        <location>Cell membrane</location>
    </subcellularLocation>
</comment>
<comment type="miscellaneous">
    <text evidence="2">Present with 124000 molecules/cell in log phase SD medium.</text>
</comment>
<sequence>MTLPGGVILVFILVGLACIAIIATIIYRKWQARQRGLQRF</sequence>
<reference key="1">
    <citation type="journal article" date="1992" name="J. Biol. Chem.">
        <title>Purification and complete sequence of a small proteolipid associated with the plasma membrane H(+)-ATPase of Saccharomyces cerevisiae.</title>
        <authorList>
            <person name="Navarre C."/>
            <person name="Ghislain M."/>
            <person name="Leterme S."/>
            <person name="Ferroud C."/>
            <person name="Dufour J.-P."/>
            <person name="Goffeau A."/>
        </authorList>
    </citation>
    <scope>NUCLEOTIDE SEQUENCE [GENOMIC DNA]</scope>
    <scope>PROTEIN SEQUENCE OF 3-40</scope>
</reference>
<reference key="2">
    <citation type="journal article" date="1992" name="Nature">
        <title>The complete DNA sequence of yeast chromosome III.</title>
        <authorList>
            <person name="Oliver S.G."/>
            <person name="van der Aart Q.J.M."/>
            <person name="Agostoni-Carbone M.L."/>
            <person name="Aigle M."/>
            <person name="Alberghina L."/>
            <person name="Alexandraki D."/>
            <person name="Antoine G."/>
            <person name="Anwar R."/>
            <person name="Ballesta J.P.G."/>
            <person name="Benit P."/>
            <person name="Berben G."/>
            <person name="Bergantino E."/>
            <person name="Biteau N."/>
            <person name="Bolle P.-A."/>
            <person name="Bolotin-Fukuhara M."/>
            <person name="Brown A."/>
            <person name="Brown A.J.P."/>
            <person name="Buhler J.-M."/>
            <person name="Carcano C."/>
            <person name="Carignani G."/>
            <person name="Cederberg H."/>
            <person name="Chanet R."/>
            <person name="Contreras R."/>
            <person name="Crouzet M."/>
            <person name="Daignan-Fornier B."/>
            <person name="Defoor E."/>
            <person name="Delgado M.D."/>
            <person name="Demolder J."/>
            <person name="Doira C."/>
            <person name="Dubois E."/>
            <person name="Dujon B."/>
            <person name="Duesterhoeft A."/>
            <person name="Erdmann D."/>
            <person name="Esteban M."/>
            <person name="Fabre F."/>
            <person name="Fairhead C."/>
            <person name="Faye G."/>
            <person name="Feldmann H."/>
            <person name="Fiers W."/>
            <person name="Francingues-Gaillard M.-C."/>
            <person name="Franco L."/>
            <person name="Frontali L."/>
            <person name="Fukuhara H."/>
            <person name="Fuller L.J."/>
            <person name="Galland P."/>
            <person name="Gent M.E."/>
            <person name="Gigot D."/>
            <person name="Gilliquet V."/>
            <person name="Glansdorff N."/>
            <person name="Goffeau A."/>
            <person name="Grenson M."/>
            <person name="Grisanti P."/>
            <person name="Grivell L.A."/>
            <person name="de Haan M."/>
            <person name="Haasemann M."/>
            <person name="Hatat D."/>
            <person name="Hoenicka J."/>
            <person name="Hegemann J.H."/>
            <person name="Herbert C.J."/>
            <person name="Hilger F."/>
            <person name="Hohmann S."/>
            <person name="Hollenberg C.P."/>
            <person name="Huse K."/>
            <person name="Iborra F."/>
            <person name="Indge K.J."/>
            <person name="Isono K."/>
            <person name="Jacq C."/>
            <person name="Jacquet M."/>
            <person name="James C.M."/>
            <person name="Jauniaux J.-C."/>
            <person name="Jia Y."/>
            <person name="Jimenez A."/>
            <person name="Kelly A."/>
            <person name="Kleinhans U."/>
            <person name="Kreisl P."/>
            <person name="Lanfranchi G."/>
            <person name="Lewis C."/>
            <person name="van der Linden C.G."/>
            <person name="Lucchini G."/>
            <person name="Lutzenkirchen K."/>
            <person name="Maat M.J."/>
            <person name="Mallet L."/>
            <person name="Mannhaupt G."/>
            <person name="Martegani E."/>
            <person name="Mathieu A."/>
            <person name="Maurer C.T.C."/>
            <person name="McConnell D."/>
            <person name="McKee R.A."/>
            <person name="Messenguy F."/>
            <person name="Mewes H.-W."/>
            <person name="Molemans F."/>
            <person name="Montague M.A."/>
            <person name="Muzi Falconi M."/>
            <person name="Navas L."/>
            <person name="Newlon C.S."/>
            <person name="Noone D."/>
            <person name="Pallier C."/>
            <person name="Panzeri L."/>
            <person name="Pearson B.M."/>
            <person name="Perea J."/>
            <person name="Philippsen P."/>
            <person name="Pierard A."/>
            <person name="Planta R.J."/>
            <person name="Plevani P."/>
            <person name="Poetsch B."/>
            <person name="Pohl F.M."/>
            <person name="Purnelle B."/>
            <person name="Ramezani Rad M."/>
            <person name="Rasmussen S.W."/>
            <person name="Raynal A."/>
            <person name="Remacha M.A."/>
            <person name="Richterich P."/>
            <person name="Roberts A.B."/>
            <person name="Rodriguez F."/>
            <person name="Sanz E."/>
            <person name="Schaaff-Gerstenschlaeger I."/>
            <person name="Scherens B."/>
            <person name="Schweitzer B."/>
            <person name="Shu Y."/>
            <person name="Skala J."/>
            <person name="Slonimski P.P."/>
            <person name="Sor F."/>
            <person name="Soustelle C."/>
            <person name="Spiegelberg R."/>
            <person name="Stateva L.I."/>
            <person name="Steensma H.Y."/>
            <person name="Steiner S."/>
            <person name="Thierry A."/>
            <person name="Thireos G."/>
            <person name="Tzermia M."/>
            <person name="Urrestarazu L.A."/>
            <person name="Valle G."/>
            <person name="Vetter I."/>
            <person name="van Vliet-Reedijk J.C."/>
            <person name="Voet M."/>
            <person name="Volckaert G."/>
            <person name="Vreken P."/>
            <person name="Wang H."/>
            <person name="Warmington J.R."/>
            <person name="von Wettstein D."/>
            <person name="Wicksteed B.L."/>
            <person name="Wilson C."/>
            <person name="Wurst H."/>
            <person name="Xu G."/>
            <person name="Yoshikawa A."/>
            <person name="Zimmermann F.K."/>
            <person name="Sgouros J.G."/>
        </authorList>
    </citation>
    <scope>NUCLEOTIDE SEQUENCE [LARGE SCALE GENOMIC DNA]</scope>
    <source>
        <strain>ATCC 204508 / S288c</strain>
    </source>
</reference>
<reference key="3">
    <citation type="journal article" date="2014" name="G3 (Bethesda)">
        <title>The reference genome sequence of Saccharomyces cerevisiae: Then and now.</title>
        <authorList>
            <person name="Engel S.R."/>
            <person name="Dietrich F.S."/>
            <person name="Fisk D.G."/>
            <person name="Binkley G."/>
            <person name="Balakrishnan R."/>
            <person name="Costanzo M.C."/>
            <person name="Dwight S.S."/>
            <person name="Hitz B.C."/>
            <person name="Karra K."/>
            <person name="Nash R.S."/>
            <person name="Weng S."/>
            <person name="Wong E.D."/>
            <person name="Lloyd P."/>
            <person name="Skrzypek M.S."/>
            <person name="Miyasato S.R."/>
            <person name="Simison M."/>
            <person name="Cherry J.M."/>
        </authorList>
    </citation>
    <scope>GENOME REANNOTATION</scope>
    <source>
        <strain>ATCC 204508 / S288c</strain>
    </source>
</reference>
<reference key="4">
    <citation type="journal article" date="2003" name="Nature">
        <title>Global analysis of protein expression in yeast.</title>
        <authorList>
            <person name="Ghaemmaghami S."/>
            <person name="Huh W.-K."/>
            <person name="Bower K."/>
            <person name="Howson R.W."/>
            <person name="Belle A."/>
            <person name="Dephoure N."/>
            <person name="O'Shea E.K."/>
            <person name="Weissman J.S."/>
        </authorList>
    </citation>
    <scope>LEVEL OF PROTEIN EXPRESSION [LARGE SCALE ANALYSIS]</scope>
</reference>
<name>PMP1_YEAST</name>
<evidence type="ECO:0000255" key="1"/>
<evidence type="ECO:0000269" key="2">
    <source>
    </source>
</evidence>
<evidence type="ECO:0000269" key="3">
    <source>
    </source>
</evidence>
<organism>
    <name type="scientific">Saccharomyces cerevisiae (strain ATCC 204508 / S288c)</name>
    <name type="common">Baker's yeast</name>
    <dbReference type="NCBI Taxonomy" id="559292"/>
    <lineage>
        <taxon>Eukaryota</taxon>
        <taxon>Fungi</taxon>
        <taxon>Dikarya</taxon>
        <taxon>Ascomycota</taxon>
        <taxon>Saccharomycotina</taxon>
        <taxon>Saccharomycetes</taxon>
        <taxon>Saccharomycetales</taxon>
        <taxon>Saccharomycetaceae</taxon>
        <taxon>Saccharomyces</taxon>
    </lineage>
</organism>
<gene>
    <name type="primary">PMP1</name>
    <name type="ordered locus">YCR024C-A</name>
    <name type="ORF">YCR24C-A</name>
</gene>
<keyword id="KW-1003">Cell membrane</keyword>
<keyword id="KW-0903">Direct protein sequencing</keyword>
<keyword id="KW-0472">Membrane</keyword>
<keyword id="KW-1185">Reference proteome</keyword>
<keyword id="KW-0812">Transmembrane</keyword>
<keyword id="KW-1133">Transmembrane helix</keyword>
<protein>
    <recommendedName>
        <fullName>Plasma membrane ATPase proteolipid 1</fullName>
    </recommendedName>
</protein>
<feature type="propeptide" id="PRO_0000022071" evidence="3">
    <location>
        <begin position="1"/>
        <end position="2"/>
    </location>
</feature>
<feature type="chain" id="PRO_0000022072" description="Plasma membrane ATPase proteolipid 1">
    <location>
        <begin position="3"/>
        <end position="40"/>
    </location>
</feature>
<feature type="transmembrane region" description="Helical" evidence="1">
    <location>
        <begin position="3"/>
        <end position="26"/>
    </location>
</feature>
<feature type="topological domain" description="Cytoplasmic" evidence="1">
    <location>
        <begin position="27"/>
        <end position="40"/>
    </location>
</feature>